<sequence>MPSKKETLTVIVIMALFLLLTAACIGLRSEHLLMAALYLVLFFAGLPTRKLAVALLPFAIFGISYDWMRICPNYEVNPIDVAGLYNLEKSLFGVMDNGVLVTPCEYFAVHHWAVADVFAGIFYLCWVPVPILFGLCLYFKKERKTYLRFALVFLFVNLIGFAGYYIHPAAPPWYAINYGFEPILNTPGNVAGLGRFDEIFGVTIFDSIYGRNANVFAAVPSLHAAYMVVALVYAIIGKCRWYVIALFSVIMAGIWGTAIYSCHHYIIDVLLGISCALLGWLFFEYGLMKIRGFRNFFDRYYQYIK</sequence>
<protein>
    <recommendedName>
        <fullName evidence="6">Phosphoinositol dihydroceramide synthase</fullName>
        <shortName evidence="6">PI-DHC synthase</shortName>
    </recommendedName>
</protein>
<dbReference type="EMBL" id="AE015928">
    <property type="protein sequence ID" value="AAO76629.1"/>
    <property type="molecule type" value="Genomic_DNA"/>
</dbReference>
<dbReference type="RefSeq" id="NP_810435.1">
    <property type="nucleotide sequence ID" value="NC_004663.1"/>
</dbReference>
<dbReference type="STRING" id="226186.BT_1522"/>
<dbReference type="PaxDb" id="226186-BT_1522"/>
<dbReference type="EnsemblBacteria" id="AAO76629">
    <property type="protein sequence ID" value="AAO76629"/>
    <property type="gene ID" value="BT_1522"/>
</dbReference>
<dbReference type="KEGG" id="bth:BT_1522"/>
<dbReference type="PATRIC" id="fig|226186.12.peg.1555"/>
<dbReference type="eggNOG" id="COG0671">
    <property type="taxonomic scope" value="Bacteria"/>
</dbReference>
<dbReference type="HOGENOM" id="CLU_064587_0_0_10"/>
<dbReference type="InParanoid" id="Q8A7K2"/>
<dbReference type="OrthoDB" id="629685at2"/>
<dbReference type="Proteomes" id="UP000001414">
    <property type="component" value="Chromosome"/>
</dbReference>
<dbReference type="GO" id="GO:0016020">
    <property type="term" value="C:membrane"/>
    <property type="evidence" value="ECO:0007669"/>
    <property type="project" value="UniProtKB-SubCell"/>
</dbReference>
<dbReference type="GO" id="GO:0102770">
    <property type="term" value="F:inositol phosphorylceramide synthase activity"/>
    <property type="evidence" value="ECO:0000315"/>
    <property type="project" value="UniProtKB"/>
</dbReference>
<dbReference type="GO" id="GO:0006665">
    <property type="term" value="P:sphingolipid metabolic process"/>
    <property type="evidence" value="ECO:0000315"/>
    <property type="project" value="UniProtKB"/>
</dbReference>
<dbReference type="CDD" id="cd03386">
    <property type="entry name" value="PAP2_Aur1_like"/>
    <property type="match status" value="1"/>
</dbReference>
<dbReference type="InterPro" id="IPR026841">
    <property type="entry name" value="Aur1/Ipt1"/>
</dbReference>
<dbReference type="InterPro" id="IPR052185">
    <property type="entry name" value="IPC_Synthase-Related"/>
</dbReference>
<dbReference type="PANTHER" id="PTHR31310">
    <property type="match status" value="1"/>
</dbReference>
<dbReference type="PANTHER" id="PTHR31310:SF7">
    <property type="entry name" value="PA-PHOSPHATASE RELATED-FAMILY PROTEIN DDB_G0268928"/>
    <property type="match status" value="1"/>
</dbReference>
<dbReference type="Pfam" id="PF14378">
    <property type="entry name" value="PAP2_3"/>
    <property type="match status" value="1"/>
</dbReference>
<dbReference type="PROSITE" id="PS51257">
    <property type="entry name" value="PROKAR_LIPOPROTEIN"/>
    <property type="match status" value="1"/>
</dbReference>
<proteinExistence type="evidence at protein level"/>
<name>PIDHC_BACTN</name>
<organism evidence="9">
    <name type="scientific">Bacteroides thetaiotaomicron (strain ATCC 29148 / DSM 2079 / JCM 5827 / CCUG 10774 / NCTC 10582 / VPI-5482 / E50)</name>
    <dbReference type="NCBI Taxonomy" id="226186"/>
    <lineage>
        <taxon>Bacteria</taxon>
        <taxon>Pseudomonadati</taxon>
        <taxon>Bacteroidota</taxon>
        <taxon>Bacteroidia</taxon>
        <taxon>Bacteroidales</taxon>
        <taxon>Bacteroidaceae</taxon>
        <taxon>Bacteroides</taxon>
    </lineage>
</organism>
<reference evidence="9" key="1">
    <citation type="journal article" date="2003" name="Science">
        <title>A genomic view of the human-Bacteroides thetaiotaomicron symbiosis.</title>
        <authorList>
            <person name="Xu J."/>
            <person name="Bjursell M.K."/>
            <person name="Himrod J."/>
            <person name="Deng S."/>
            <person name="Carmichael L.K."/>
            <person name="Chiang H.C."/>
            <person name="Hooper L.V."/>
            <person name="Gordon J.I."/>
        </authorList>
    </citation>
    <scope>NUCLEOTIDE SEQUENCE [LARGE SCALE GENOMIC DNA]</scope>
    <source>
        <strain evidence="9">ATCC 29148 / DSM 2079 / JCM 5827 / CCUG 10774 / NCTC 10582 / VPI-5482 / E50</strain>
    </source>
</reference>
<reference evidence="9" key="2">
    <citation type="journal article" date="2009" name="Proc. Natl. Acad. Sci. U.S.A.">
        <title>Characterizing a model human gut microbiota composed of members of its two dominant bacterial phyla.</title>
        <authorList>
            <person name="Mahowald M.A."/>
            <person name="Rey F.E."/>
            <person name="Seedorf H."/>
            <person name="Turnbaugh P.J."/>
            <person name="Fulton R.S."/>
            <person name="Wollam A."/>
            <person name="Shah N."/>
            <person name="Wang C."/>
            <person name="Magrini V."/>
            <person name="Wilson R.K."/>
            <person name="Cantarel B.L."/>
            <person name="Coutinho P.M."/>
            <person name="Henrissat B."/>
            <person name="Crock L.W."/>
            <person name="Russell A."/>
            <person name="Verberkmoes N.C."/>
            <person name="Hettich R.L."/>
            <person name="Gordon J.I."/>
        </authorList>
    </citation>
    <scope>NUCLEOTIDE SEQUENCE [LARGE SCALE GENOMIC DNA]</scope>
    <source>
        <strain evidence="9">ATCC 29148 / DSM 2079 / JCM 5827 / CCUG 10774 / NCTC 10582 / VPI-5482 / E50</strain>
    </source>
</reference>
<reference evidence="6" key="3">
    <citation type="journal article" date="2022" name="Microbiol. Spectr.">
        <title>Lipidomics Analysis of Outer Membrane Vesicles and Elucidation of the Inositol Phosphoceramide Biosynthetic Pathway in Bacteroides thetaiotaomicron.</title>
        <authorList>
            <person name="Sartorio M.G."/>
            <person name="Valguarnera E."/>
            <person name="Hsu F.F."/>
            <person name="Feldman M.F."/>
        </authorList>
    </citation>
    <scope>FUNCTION</scope>
    <scope>DISRUPTION PHENOTYPE</scope>
    <source>
        <strain evidence="5">ATCC 29148 / DSM 2079 / JCM 5827 / CCUG 10774 / NCTC 10582 / VPI-5482 / E50</strain>
    </source>
</reference>
<reference evidence="6" key="4">
    <citation type="journal article" date="2022" name="Nat. Microbiol.">
        <title>Characterization of inositol lipid metabolism in gut-associated Bacteroidetes.</title>
        <authorList>
            <person name="Heaver S.L."/>
            <person name="Le H.H."/>
            <person name="Tang P."/>
            <person name="Basle A."/>
            <person name="Mirretta Barone C."/>
            <person name="Vu D.L."/>
            <person name="Waters J.L."/>
            <person name="Marles-Wright J."/>
            <person name="Johnson E.L."/>
            <person name="Campopiano D.J."/>
            <person name="Ley R.E."/>
        </authorList>
    </citation>
    <scope>FUNCTION</scope>
    <scope>CATALYTIC ACTIVITY</scope>
    <scope>DISRUPTION PHENOTYPE</scope>
</reference>
<accession>Q8A7K2</accession>
<keyword id="KW-0443">Lipid metabolism</keyword>
<keyword id="KW-0449">Lipoprotein</keyword>
<keyword id="KW-0472">Membrane</keyword>
<keyword id="KW-0564">Palmitate</keyword>
<keyword id="KW-1185">Reference proteome</keyword>
<keyword id="KW-0732">Signal</keyword>
<keyword id="KW-0746">Sphingolipid metabolism</keyword>
<keyword id="KW-0808">Transferase</keyword>
<keyword id="KW-0812">Transmembrane</keyword>
<keyword id="KW-1133">Transmembrane helix</keyword>
<evidence type="ECO:0000255" key="1"/>
<evidence type="ECO:0000255" key="2">
    <source>
        <dbReference type="PROSITE-ProRule" id="PRU00303"/>
    </source>
</evidence>
<evidence type="ECO:0000269" key="3">
    <source>
    </source>
</evidence>
<evidence type="ECO:0000269" key="4">
    <source>
    </source>
</evidence>
<evidence type="ECO:0000303" key="5">
    <source>
    </source>
</evidence>
<evidence type="ECO:0000305" key="6"/>
<evidence type="ECO:0000305" key="7">
    <source>
    </source>
</evidence>
<evidence type="ECO:0000312" key="8">
    <source>
        <dbReference type="EMBL" id="AAO76629.1"/>
    </source>
</evidence>
<evidence type="ECO:0000312" key="9">
    <source>
        <dbReference type="Proteomes" id="UP000001414"/>
    </source>
</evidence>
<gene>
    <name evidence="8" type="ordered locus">BT_1522</name>
</gene>
<feature type="signal peptide" evidence="2">
    <location>
        <begin position="1"/>
        <end position="23"/>
    </location>
</feature>
<feature type="chain" id="PRO_0000456698" description="Phosphoinositol dihydroceramide synthase">
    <location>
        <begin position="24"/>
        <end position="305"/>
    </location>
</feature>
<feature type="transmembrane region" description="Helical" evidence="1">
    <location>
        <begin position="41"/>
        <end position="61"/>
    </location>
</feature>
<feature type="transmembrane region" description="Helical" evidence="1">
    <location>
        <begin position="117"/>
        <end position="137"/>
    </location>
</feature>
<feature type="transmembrane region" description="Helical" evidence="1">
    <location>
        <begin position="149"/>
        <end position="169"/>
    </location>
</feature>
<feature type="transmembrane region" description="Helical" evidence="1">
    <location>
        <begin position="216"/>
        <end position="236"/>
    </location>
</feature>
<feature type="transmembrane region" description="Helical" evidence="1">
    <location>
        <begin position="241"/>
        <end position="261"/>
    </location>
</feature>
<feature type="transmembrane region" description="Helical" evidence="1">
    <location>
        <begin position="266"/>
        <end position="286"/>
    </location>
</feature>
<feature type="lipid moiety-binding region" description="N-palmitoyl cysteine" evidence="2">
    <location>
        <position position="24"/>
    </location>
</feature>
<feature type="lipid moiety-binding region" description="S-diacylglycerol cysteine" evidence="2">
    <location>
        <position position="24"/>
    </location>
</feature>
<comment type="function">
    <text evidence="3 4">Catalyzes the addition of a phosphorylinositol group onto dihydroceramide to form phosphoinositol dihydroceramide (PI-DHC), an essential step in sphingolipid biosynthesis.</text>
</comment>
<comment type="catalytic activity">
    <reaction evidence="7">
        <text>N-(2-hydroxy-fatty acyl)-dihydroceramide + a 1,2-diacyl-sn-glycero-3-phospho-(1D-myo-inositol) = inositol-1-phospho-N-(2-hydroxy-fatty acyl)-dihydroceramide + a 1,2-diacyl-sn-glycerol</text>
        <dbReference type="Rhea" id="RHEA:72623"/>
        <dbReference type="ChEBI" id="CHEBI:17815"/>
        <dbReference type="ChEBI" id="CHEBI:57880"/>
        <dbReference type="ChEBI" id="CHEBI:192473"/>
        <dbReference type="ChEBI" id="CHEBI:192475"/>
    </reaction>
</comment>
<comment type="subcellular location">
    <subcellularLocation>
        <location evidence="1">Membrane</location>
        <topology evidence="1">Multi-pass membrane protein</topology>
    </subcellularLocation>
</comment>
<comment type="disruption phenotype">
    <text evidence="3 4">Phosphatidylinositol dihydroceramide (PI-DHC) is absent (PubMed:35080445). Levels of inositol phosphoceramide (IPC) are severely reduced and ceramide levels are increased (PubMed:35080445). Results in a mild growth defect (PubMed:35080445, PubMed:35725777). Abnormal RNA level of genes involved in carbohydrate degradation (PubMed:35725777). Does not appear to affect production of outer membrane vesicles (OMVs) or OMV cargo selection (PubMed:35080445).</text>
</comment>